<protein>
    <recommendedName>
        <fullName evidence="1">Small ribosomal subunit protein uS10</fullName>
    </recommendedName>
    <alternativeName>
        <fullName evidence="2">30S ribosomal protein S10</fullName>
    </alternativeName>
</protein>
<organism>
    <name type="scientific">Parabacteroides distasonis (strain ATCC 8503 / DSM 20701 / CIP 104284 / JCM 5825 / NCTC 11152)</name>
    <dbReference type="NCBI Taxonomy" id="435591"/>
    <lineage>
        <taxon>Bacteria</taxon>
        <taxon>Pseudomonadati</taxon>
        <taxon>Bacteroidota</taxon>
        <taxon>Bacteroidia</taxon>
        <taxon>Bacteroidales</taxon>
        <taxon>Tannerellaceae</taxon>
        <taxon>Parabacteroides</taxon>
    </lineage>
</organism>
<sequence>MSQKIRIKLKSYDYSLVDKSAEKIVKTVKATGAIVSGPIPLPTHKRIFTVNRSTFVNKKSREQFELSSYKRLIDIYSSTAKTVDALMKLELPSGVEVEIKV</sequence>
<proteinExistence type="inferred from homology"/>
<dbReference type="EMBL" id="CP000140">
    <property type="protein sequence ID" value="ABR44106.1"/>
    <property type="molecule type" value="Genomic_DNA"/>
</dbReference>
<dbReference type="RefSeq" id="WP_005853961.1">
    <property type="nucleotide sequence ID" value="NZ_LR215978.1"/>
</dbReference>
<dbReference type="SMR" id="A6LEJ2"/>
<dbReference type="STRING" id="435591.BDI_2381"/>
<dbReference type="PaxDb" id="435591-BDI_2381"/>
<dbReference type="GeneID" id="93522374"/>
<dbReference type="KEGG" id="pdi:BDI_2381"/>
<dbReference type="eggNOG" id="COG0051">
    <property type="taxonomic scope" value="Bacteria"/>
</dbReference>
<dbReference type="HOGENOM" id="CLU_122625_1_3_10"/>
<dbReference type="BioCyc" id="PDIS435591:G1G5A-2446-MONOMER"/>
<dbReference type="Proteomes" id="UP000000566">
    <property type="component" value="Chromosome"/>
</dbReference>
<dbReference type="GO" id="GO:1990904">
    <property type="term" value="C:ribonucleoprotein complex"/>
    <property type="evidence" value="ECO:0007669"/>
    <property type="project" value="UniProtKB-KW"/>
</dbReference>
<dbReference type="GO" id="GO:0005840">
    <property type="term" value="C:ribosome"/>
    <property type="evidence" value="ECO:0007669"/>
    <property type="project" value="UniProtKB-KW"/>
</dbReference>
<dbReference type="GO" id="GO:0003735">
    <property type="term" value="F:structural constituent of ribosome"/>
    <property type="evidence" value="ECO:0007669"/>
    <property type="project" value="InterPro"/>
</dbReference>
<dbReference type="GO" id="GO:0000049">
    <property type="term" value="F:tRNA binding"/>
    <property type="evidence" value="ECO:0007669"/>
    <property type="project" value="UniProtKB-UniRule"/>
</dbReference>
<dbReference type="GO" id="GO:0006412">
    <property type="term" value="P:translation"/>
    <property type="evidence" value="ECO:0007669"/>
    <property type="project" value="UniProtKB-UniRule"/>
</dbReference>
<dbReference type="FunFam" id="3.30.70.600:FF:000003">
    <property type="entry name" value="30S ribosomal protein S10"/>
    <property type="match status" value="1"/>
</dbReference>
<dbReference type="Gene3D" id="3.30.70.600">
    <property type="entry name" value="Ribosomal protein S10 domain"/>
    <property type="match status" value="1"/>
</dbReference>
<dbReference type="HAMAP" id="MF_00508">
    <property type="entry name" value="Ribosomal_uS10"/>
    <property type="match status" value="1"/>
</dbReference>
<dbReference type="InterPro" id="IPR001848">
    <property type="entry name" value="Ribosomal_uS10"/>
</dbReference>
<dbReference type="InterPro" id="IPR018268">
    <property type="entry name" value="Ribosomal_uS10_CS"/>
</dbReference>
<dbReference type="InterPro" id="IPR027486">
    <property type="entry name" value="Ribosomal_uS10_dom"/>
</dbReference>
<dbReference type="InterPro" id="IPR036838">
    <property type="entry name" value="Ribosomal_uS10_dom_sf"/>
</dbReference>
<dbReference type="NCBIfam" id="NF001861">
    <property type="entry name" value="PRK00596.1"/>
    <property type="match status" value="1"/>
</dbReference>
<dbReference type="NCBIfam" id="TIGR01049">
    <property type="entry name" value="rpsJ_bact"/>
    <property type="match status" value="1"/>
</dbReference>
<dbReference type="PANTHER" id="PTHR11700">
    <property type="entry name" value="30S RIBOSOMAL PROTEIN S10 FAMILY MEMBER"/>
    <property type="match status" value="1"/>
</dbReference>
<dbReference type="Pfam" id="PF00338">
    <property type="entry name" value="Ribosomal_S10"/>
    <property type="match status" value="1"/>
</dbReference>
<dbReference type="PRINTS" id="PR00971">
    <property type="entry name" value="RIBOSOMALS10"/>
</dbReference>
<dbReference type="SMART" id="SM01403">
    <property type="entry name" value="Ribosomal_S10"/>
    <property type="match status" value="1"/>
</dbReference>
<dbReference type="SUPFAM" id="SSF54999">
    <property type="entry name" value="Ribosomal protein S10"/>
    <property type="match status" value="1"/>
</dbReference>
<dbReference type="PROSITE" id="PS00361">
    <property type="entry name" value="RIBOSOMAL_S10"/>
    <property type="match status" value="1"/>
</dbReference>
<feature type="chain" id="PRO_1000015073" description="Small ribosomal subunit protein uS10">
    <location>
        <begin position="1"/>
        <end position="101"/>
    </location>
</feature>
<evidence type="ECO:0000255" key="1">
    <source>
        <dbReference type="HAMAP-Rule" id="MF_00508"/>
    </source>
</evidence>
<evidence type="ECO:0000305" key="2"/>
<comment type="function">
    <text evidence="1">Involved in the binding of tRNA to the ribosomes.</text>
</comment>
<comment type="subunit">
    <text evidence="1">Part of the 30S ribosomal subunit.</text>
</comment>
<comment type="similarity">
    <text evidence="1">Belongs to the universal ribosomal protein uS10 family.</text>
</comment>
<keyword id="KW-1185">Reference proteome</keyword>
<keyword id="KW-0687">Ribonucleoprotein</keyword>
<keyword id="KW-0689">Ribosomal protein</keyword>
<reference key="1">
    <citation type="journal article" date="2007" name="PLoS Biol.">
        <title>Evolution of symbiotic bacteria in the distal human intestine.</title>
        <authorList>
            <person name="Xu J."/>
            <person name="Mahowald M.A."/>
            <person name="Ley R.E."/>
            <person name="Lozupone C.A."/>
            <person name="Hamady M."/>
            <person name="Martens E.C."/>
            <person name="Henrissat B."/>
            <person name="Coutinho P.M."/>
            <person name="Minx P."/>
            <person name="Latreille P."/>
            <person name="Cordum H."/>
            <person name="Van Brunt A."/>
            <person name="Kim K."/>
            <person name="Fulton R.S."/>
            <person name="Fulton L.A."/>
            <person name="Clifton S.W."/>
            <person name="Wilson R.K."/>
            <person name="Knight R.D."/>
            <person name="Gordon J.I."/>
        </authorList>
    </citation>
    <scope>NUCLEOTIDE SEQUENCE [LARGE SCALE GENOMIC DNA]</scope>
    <source>
        <strain>ATCC 8503 / DSM 20701 / CIP 104284 / JCM 5825 / NCTC 11152</strain>
    </source>
</reference>
<gene>
    <name evidence="1" type="primary">rpsJ</name>
    <name type="ordered locus">BDI_2381</name>
</gene>
<name>RS10_PARD8</name>
<accession>A6LEJ2</accession>